<organism>
    <name type="scientific">Thermoplasma acidophilum (strain ATCC 25905 / DSM 1728 / JCM 9062 / NBRC 15155 / AMRC-C165)</name>
    <dbReference type="NCBI Taxonomy" id="273075"/>
    <lineage>
        <taxon>Archaea</taxon>
        <taxon>Methanobacteriati</taxon>
        <taxon>Thermoplasmatota</taxon>
        <taxon>Thermoplasmata</taxon>
        <taxon>Thermoplasmatales</taxon>
        <taxon>Thermoplasmataceae</taxon>
        <taxon>Thermoplasma</taxon>
    </lineage>
</organism>
<proteinExistence type="inferred from homology"/>
<gene>
    <name evidence="1" type="primary">thrS</name>
    <name type="ordered locus">Ta0330</name>
</gene>
<dbReference type="EC" id="6.1.1.3" evidence="1"/>
<dbReference type="EMBL" id="AL445064">
    <property type="protein sequence ID" value="CAC11475.1"/>
    <property type="molecule type" value="Genomic_DNA"/>
</dbReference>
<dbReference type="RefSeq" id="WP_010900759.1">
    <property type="nucleotide sequence ID" value="NC_002578.1"/>
</dbReference>
<dbReference type="SMR" id="Q9HL99"/>
<dbReference type="FunCoup" id="Q9HL99">
    <property type="interactions" value="184"/>
</dbReference>
<dbReference type="STRING" id="273075.gene:9571548"/>
<dbReference type="PaxDb" id="273075-Ta0330"/>
<dbReference type="EnsemblBacteria" id="CAC11475">
    <property type="protein sequence ID" value="CAC11475"/>
    <property type="gene ID" value="CAC11475"/>
</dbReference>
<dbReference type="KEGG" id="tac:Ta0330"/>
<dbReference type="eggNOG" id="arCOG00401">
    <property type="taxonomic scope" value="Archaea"/>
</dbReference>
<dbReference type="HOGENOM" id="CLU_008554_0_1_2"/>
<dbReference type="InParanoid" id="Q9HL99"/>
<dbReference type="OrthoDB" id="372136at2157"/>
<dbReference type="Proteomes" id="UP000001024">
    <property type="component" value="Chromosome"/>
</dbReference>
<dbReference type="GO" id="GO:0005737">
    <property type="term" value="C:cytoplasm"/>
    <property type="evidence" value="ECO:0007669"/>
    <property type="project" value="UniProtKB-SubCell"/>
</dbReference>
<dbReference type="GO" id="GO:0002161">
    <property type="term" value="F:aminoacyl-tRNA deacylase activity"/>
    <property type="evidence" value="ECO:0007669"/>
    <property type="project" value="UniProtKB-ARBA"/>
</dbReference>
<dbReference type="GO" id="GO:0005524">
    <property type="term" value="F:ATP binding"/>
    <property type="evidence" value="ECO:0007669"/>
    <property type="project" value="UniProtKB-UniRule"/>
</dbReference>
<dbReference type="GO" id="GO:0046872">
    <property type="term" value="F:metal ion binding"/>
    <property type="evidence" value="ECO:0007669"/>
    <property type="project" value="UniProtKB-KW"/>
</dbReference>
<dbReference type="GO" id="GO:0004829">
    <property type="term" value="F:threonine-tRNA ligase activity"/>
    <property type="evidence" value="ECO:0007669"/>
    <property type="project" value="UniProtKB-UniRule"/>
</dbReference>
<dbReference type="GO" id="GO:0000049">
    <property type="term" value="F:tRNA binding"/>
    <property type="evidence" value="ECO:0007669"/>
    <property type="project" value="UniProtKB-KW"/>
</dbReference>
<dbReference type="GO" id="GO:0006435">
    <property type="term" value="P:threonyl-tRNA aminoacylation"/>
    <property type="evidence" value="ECO:0007669"/>
    <property type="project" value="UniProtKB-UniRule"/>
</dbReference>
<dbReference type="CDD" id="cd00860">
    <property type="entry name" value="ThrRS_anticodon"/>
    <property type="match status" value="1"/>
</dbReference>
<dbReference type="CDD" id="cd00771">
    <property type="entry name" value="ThrRS_core"/>
    <property type="match status" value="1"/>
</dbReference>
<dbReference type="FunFam" id="3.30.930.10:FF:000002">
    <property type="entry name" value="Threonine--tRNA ligase"/>
    <property type="match status" value="2"/>
</dbReference>
<dbReference type="FunFam" id="3.30.980.10:FF:000005">
    <property type="entry name" value="Threonyl-tRNA synthetase, mitochondrial"/>
    <property type="match status" value="1"/>
</dbReference>
<dbReference type="Gene3D" id="2.20.28.10">
    <property type="match status" value="1"/>
</dbReference>
<dbReference type="Gene3D" id="3.30.54.20">
    <property type="match status" value="1"/>
</dbReference>
<dbReference type="Gene3D" id="3.40.50.800">
    <property type="entry name" value="Anticodon-binding domain"/>
    <property type="match status" value="1"/>
</dbReference>
<dbReference type="Gene3D" id="3.30.930.10">
    <property type="entry name" value="Bira Bifunctional Protein, Domain 2"/>
    <property type="match status" value="1"/>
</dbReference>
<dbReference type="Gene3D" id="3.30.980.10">
    <property type="entry name" value="Threonyl-trna Synthetase, Chain A, domain 2"/>
    <property type="match status" value="1"/>
</dbReference>
<dbReference type="HAMAP" id="MF_00184">
    <property type="entry name" value="Thr_tRNA_synth"/>
    <property type="match status" value="1"/>
</dbReference>
<dbReference type="InterPro" id="IPR002314">
    <property type="entry name" value="aa-tRNA-synt_IIb"/>
</dbReference>
<dbReference type="InterPro" id="IPR006195">
    <property type="entry name" value="aa-tRNA-synth_II"/>
</dbReference>
<dbReference type="InterPro" id="IPR045864">
    <property type="entry name" value="aa-tRNA-synth_II/BPL/LPL"/>
</dbReference>
<dbReference type="InterPro" id="IPR004154">
    <property type="entry name" value="Anticodon-bd"/>
</dbReference>
<dbReference type="InterPro" id="IPR036621">
    <property type="entry name" value="Anticodon-bd_dom_sf"/>
</dbReference>
<dbReference type="InterPro" id="IPR004095">
    <property type="entry name" value="TGS"/>
</dbReference>
<dbReference type="InterPro" id="IPR002320">
    <property type="entry name" value="Thr-tRNA-ligase_IIa"/>
</dbReference>
<dbReference type="InterPro" id="IPR018163">
    <property type="entry name" value="Thr/Ala-tRNA-synth_IIc_edit"/>
</dbReference>
<dbReference type="InterPro" id="IPR047246">
    <property type="entry name" value="ThrRS_anticodon"/>
</dbReference>
<dbReference type="InterPro" id="IPR033728">
    <property type="entry name" value="ThrRS_core"/>
</dbReference>
<dbReference type="InterPro" id="IPR012947">
    <property type="entry name" value="tRNA_SAD"/>
</dbReference>
<dbReference type="PANTHER" id="PTHR11451:SF44">
    <property type="entry name" value="THREONINE--TRNA LIGASE, CHLOROPLASTIC_MITOCHONDRIAL 2"/>
    <property type="match status" value="1"/>
</dbReference>
<dbReference type="PANTHER" id="PTHR11451">
    <property type="entry name" value="THREONINE-TRNA LIGASE"/>
    <property type="match status" value="1"/>
</dbReference>
<dbReference type="Pfam" id="PF03129">
    <property type="entry name" value="HGTP_anticodon"/>
    <property type="match status" value="1"/>
</dbReference>
<dbReference type="Pfam" id="PF00587">
    <property type="entry name" value="tRNA-synt_2b"/>
    <property type="match status" value="1"/>
</dbReference>
<dbReference type="Pfam" id="PF07973">
    <property type="entry name" value="tRNA_SAD"/>
    <property type="match status" value="1"/>
</dbReference>
<dbReference type="PRINTS" id="PR01047">
    <property type="entry name" value="TRNASYNTHTHR"/>
</dbReference>
<dbReference type="SMART" id="SM00863">
    <property type="entry name" value="tRNA_SAD"/>
    <property type="match status" value="1"/>
</dbReference>
<dbReference type="SUPFAM" id="SSF52954">
    <property type="entry name" value="Class II aaRS ABD-related"/>
    <property type="match status" value="1"/>
</dbReference>
<dbReference type="SUPFAM" id="SSF55681">
    <property type="entry name" value="Class II aaRS and biotin synthetases"/>
    <property type="match status" value="1"/>
</dbReference>
<dbReference type="SUPFAM" id="SSF55186">
    <property type="entry name" value="ThrRS/AlaRS common domain"/>
    <property type="match status" value="1"/>
</dbReference>
<dbReference type="PROSITE" id="PS50862">
    <property type="entry name" value="AA_TRNA_LIGASE_II"/>
    <property type="match status" value="1"/>
</dbReference>
<dbReference type="PROSITE" id="PS51880">
    <property type="entry name" value="TGS"/>
    <property type="match status" value="1"/>
</dbReference>
<name>SYT_THEAC</name>
<accession>Q9HL99</accession>
<keyword id="KW-0030">Aminoacyl-tRNA synthetase</keyword>
<keyword id="KW-0067">ATP-binding</keyword>
<keyword id="KW-0963">Cytoplasm</keyword>
<keyword id="KW-0436">Ligase</keyword>
<keyword id="KW-0479">Metal-binding</keyword>
<keyword id="KW-0547">Nucleotide-binding</keyword>
<keyword id="KW-0648">Protein biosynthesis</keyword>
<keyword id="KW-1185">Reference proteome</keyword>
<keyword id="KW-0694">RNA-binding</keyword>
<keyword id="KW-0820">tRNA-binding</keyword>
<keyword id="KW-0862">Zinc</keyword>
<comment type="function">
    <text evidence="1">Catalyzes the attachment of threonine to tRNA(Thr) in a two-step reaction: L-threonine is first activated by ATP to form Thr-AMP and then transferred to the acceptor end of tRNA(Thr).</text>
</comment>
<comment type="catalytic activity">
    <reaction evidence="1">
        <text>tRNA(Thr) + L-threonine + ATP = L-threonyl-tRNA(Thr) + AMP + diphosphate + H(+)</text>
        <dbReference type="Rhea" id="RHEA:24624"/>
        <dbReference type="Rhea" id="RHEA-COMP:9670"/>
        <dbReference type="Rhea" id="RHEA-COMP:9704"/>
        <dbReference type="ChEBI" id="CHEBI:15378"/>
        <dbReference type="ChEBI" id="CHEBI:30616"/>
        <dbReference type="ChEBI" id="CHEBI:33019"/>
        <dbReference type="ChEBI" id="CHEBI:57926"/>
        <dbReference type="ChEBI" id="CHEBI:78442"/>
        <dbReference type="ChEBI" id="CHEBI:78534"/>
        <dbReference type="ChEBI" id="CHEBI:456215"/>
        <dbReference type="EC" id="6.1.1.3"/>
    </reaction>
</comment>
<comment type="cofactor">
    <cofactor evidence="1">
        <name>Zn(2+)</name>
        <dbReference type="ChEBI" id="CHEBI:29105"/>
    </cofactor>
    <text evidence="1">Binds 1 zinc ion per subunit.</text>
</comment>
<comment type="subunit">
    <text evidence="1">Homodimer.</text>
</comment>
<comment type="subcellular location">
    <subcellularLocation>
        <location evidence="1">Cytoplasm</location>
    </subcellularLocation>
</comment>
<comment type="similarity">
    <text evidence="1">Belongs to the class-II aminoacyl-tRNA synthetase family.</text>
</comment>
<evidence type="ECO:0000255" key="1">
    <source>
        <dbReference type="HAMAP-Rule" id="MF_00184"/>
    </source>
</evidence>
<evidence type="ECO:0000255" key="2">
    <source>
        <dbReference type="PROSITE-ProRule" id="PRU01228"/>
    </source>
</evidence>
<feature type="chain" id="PRO_0000101115" description="Threonine--tRNA ligase">
    <location>
        <begin position="1"/>
        <end position="660"/>
    </location>
</feature>
<feature type="domain" description="TGS" evidence="2">
    <location>
        <begin position="1"/>
        <end position="49"/>
    </location>
</feature>
<feature type="region of interest" description="Catalytic" evidence="1">
    <location>
        <begin position="225"/>
        <end position="554"/>
    </location>
</feature>
<feature type="binding site" evidence="1">
    <location>
        <position position="318"/>
    </location>
    <ligand>
        <name>Zn(2+)</name>
        <dbReference type="ChEBI" id="CHEBI:29105"/>
    </ligand>
</feature>
<feature type="binding site" evidence="1">
    <location>
        <position position="369"/>
    </location>
    <ligand>
        <name>Zn(2+)</name>
        <dbReference type="ChEBI" id="CHEBI:29105"/>
    </ligand>
</feature>
<feature type="binding site" evidence="1">
    <location>
        <position position="531"/>
    </location>
    <ligand>
        <name>Zn(2+)</name>
        <dbReference type="ChEBI" id="CHEBI:29105"/>
    </ligand>
</feature>
<protein>
    <recommendedName>
        <fullName evidence="1">Threonine--tRNA ligase</fullName>
        <ecNumber evidence="1">6.1.1.3</ecNumber>
    </recommendedName>
    <alternativeName>
        <fullName evidence="1">Threonyl-tRNA synthetase</fullName>
        <shortName evidence="1">ThrRS</shortName>
    </alternativeName>
</protein>
<sequence>MPDSIVHVKKGQRFLDVIKDKNVVAVKIDSVLHDLRDVAERDVDAIPVSVYSDDGLYILRHSAAHLLANAVTNLYPDALPNTGPVVENGFYYDFDMKPIGEEDLAKIEDEMRRIQKENVPIERIVYQKADLLRIFAKNPYKIRIIEDNVSDASSVYRQGNFVDLCLGPHVPSTGYIKAFKLLNIASAVYKHDESKTLVRIYGTAFPDEKLLKQYLNNLEEAKRRDHRRIIAEMDLAVFNSEWAPGFPLYTQYGQTIRKELLSYMDSMNRKNGWFDVWTPHVFRDTIWKQSGHYAKYRPNMYLFTLPDGDSYGIKPMNCPGHIAIFSRRKYSYRDLPVRYSEPGTVYRYEKSGEVGGLTRPRAFTQDDGHAFLRMDQIGDEIRTLLTMVKDVFTILFGNIELSFDLSVIDRDHPENYLVSYVCRNCGYRIEGARGTDIECPVCHSHDLEPDLSVWDNATEQLRDALKSMGIEYKEYPGEAAFYGPKIDVHVKDAIGRMWQLSTIQLDFFMPVNFGLTYTNSEGKEDRVVMIHRAIYGSYERVMAILLEHYAGKLPTWLTPIQTYVVPISSNFDEYARHVHEELIRHGIRSEIDTSQETVSKKIKLIHPYRPAYIIVVGSKEMETNSVTARNREGKSKTYSLSEFIDVVKKEIEQRKVDQAF</sequence>
<reference key="1">
    <citation type="journal article" date="2000" name="Nature">
        <title>The genome sequence of the thermoacidophilic scavenger Thermoplasma acidophilum.</title>
        <authorList>
            <person name="Ruepp A."/>
            <person name="Graml W."/>
            <person name="Santos-Martinez M.-L."/>
            <person name="Koretke K.K."/>
            <person name="Volker C."/>
            <person name="Mewes H.-W."/>
            <person name="Frishman D."/>
            <person name="Stocker S."/>
            <person name="Lupas A.N."/>
            <person name="Baumeister W."/>
        </authorList>
    </citation>
    <scope>NUCLEOTIDE SEQUENCE [LARGE SCALE GENOMIC DNA]</scope>
    <source>
        <strain>ATCC 25905 / DSM 1728 / JCM 9062 / NBRC 15155 / AMRC-C165</strain>
    </source>
</reference>